<reference key="1">
    <citation type="journal article" date="2005" name="PLoS Biol.">
        <title>The genomes of Oryza sativa: a history of duplications.</title>
        <authorList>
            <person name="Yu J."/>
            <person name="Wang J."/>
            <person name="Lin W."/>
            <person name="Li S."/>
            <person name="Li H."/>
            <person name="Zhou J."/>
            <person name="Ni P."/>
            <person name="Dong W."/>
            <person name="Hu S."/>
            <person name="Zeng C."/>
            <person name="Zhang J."/>
            <person name="Zhang Y."/>
            <person name="Li R."/>
            <person name="Xu Z."/>
            <person name="Li S."/>
            <person name="Li X."/>
            <person name="Zheng H."/>
            <person name="Cong L."/>
            <person name="Lin L."/>
            <person name="Yin J."/>
            <person name="Geng J."/>
            <person name="Li G."/>
            <person name="Shi J."/>
            <person name="Liu J."/>
            <person name="Lv H."/>
            <person name="Li J."/>
            <person name="Wang J."/>
            <person name="Deng Y."/>
            <person name="Ran L."/>
            <person name="Shi X."/>
            <person name="Wang X."/>
            <person name="Wu Q."/>
            <person name="Li C."/>
            <person name="Ren X."/>
            <person name="Wang J."/>
            <person name="Wang X."/>
            <person name="Li D."/>
            <person name="Liu D."/>
            <person name="Zhang X."/>
            <person name="Ji Z."/>
            <person name="Zhao W."/>
            <person name="Sun Y."/>
            <person name="Zhang Z."/>
            <person name="Bao J."/>
            <person name="Han Y."/>
            <person name="Dong L."/>
            <person name="Ji J."/>
            <person name="Chen P."/>
            <person name="Wu S."/>
            <person name="Liu J."/>
            <person name="Xiao Y."/>
            <person name="Bu D."/>
            <person name="Tan J."/>
            <person name="Yang L."/>
            <person name="Ye C."/>
            <person name="Zhang J."/>
            <person name="Xu J."/>
            <person name="Zhou Y."/>
            <person name="Yu Y."/>
            <person name="Zhang B."/>
            <person name="Zhuang S."/>
            <person name="Wei H."/>
            <person name="Liu B."/>
            <person name="Lei M."/>
            <person name="Yu H."/>
            <person name="Li Y."/>
            <person name="Xu H."/>
            <person name="Wei S."/>
            <person name="He X."/>
            <person name="Fang L."/>
            <person name="Zhang Z."/>
            <person name="Zhang Y."/>
            <person name="Huang X."/>
            <person name="Su Z."/>
            <person name="Tong W."/>
            <person name="Li J."/>
            <person name="Tong Z."/>
            <person name="Li S."/>
            <person name="Ye J."/>
            <person name="Wang L."/>
            <person name="Fang L."/>
            <person name="Lei T."/>
            <person name="Chen C.-S."/>
            <person name="Chen H.-C."/>
            <person name="Xu Z."/>
            <person name="Li H."/>
            <person name="Huang H."/>
            <person name="Zhang F."/>
            <person name="Xu H."/>
            <person name="Li N."/>
            <person name="Zhao C."/>
            <person name="Li S."/>
            <person name="Dong L."/>
            <person name="Huang Y."/>
            <person name="Li L."/>
            <person name="Xi Y."/>
            <person name="Qi Q."/>
            <person name="Li W."/>
            <person name="Zhang B."/>
            <person name="Hu W."/>
            <person name="Zhang Y."/>
            <person name="Tian X."/>
            <person name="Jiao Y."/>
            <person name="Liang X."/>
            <person name="Jin J."/>
            <person name="Gao L."/>
            <person name="Zheng W."/>
            <person name="Hao B."/>
            <person name="Liu S.-M."/>
            <person name="Wang W."/>
            <person name="Yuan L."/>
            <person name="Cao M."/>
            <person name="McDermott J."/>
            <person name="Samudrala R."/>
            <person name="Wang J."/>
            <person name="Wong G.K.-S."/>
            <person name="Yang H."/>
        </authorList>
    </citation>
    <scope>NUCLEOTIDE SEQUENCE [LARGE SCALE GENOMIC DNA]</scope>
    <source>
        <strain>cv. 93-11</strain>
    </source>
</reference>
<reference key="2">
    <citation type="journal article" date="2008" name="Plant Mol. Biol.">
        <title>A genome-wide survey of HD-Zip genes in rice and analysis of drought-responsive family members.</title>
        <authorList>
            <person name="Agalou A."/>
            <person name="Purwantomo S."/>
            <person name="Oevernaes E."/>
            <person name="Johannesson H."/>
            <person name="Zhu X."/>
            <person name="Estiati A."/>
            <person name="de Kam R.J."/>
            <person name="Engstroem P."/>
            <person name="Slamet-Loedin I.H."/>
            <person name="Zhu Z."/>
            <person name="Wang M."/>
            <person name="Xiong L."/>
            <person name="Meijer A.H."/>
            <person name="Ouwerkerk P.B.F."/>
        </authorList>
    </citation>
    <scope>NUCLEOTIDE SEQUENCE [MRNA] OF 146-253</scope>
    <scope>TISSUE SPECIFICITY</scope>
    <scope>GENE FAMILY</scope>
    <scope>NOMENCLATURE</scope>
    <source>
        <strain>cv. Minghui 86</strain>
    </source>
</reference>
<gene>
    <name type="primary">HOX21</name>
    <name type="ORF">OsI_009951</name>
</gene>
<keyword id="KW-0238">DNA-binding</keyword>
<keyword id="KW-0371">Homeobox</keyword>
<keyword id="KW-0539">Nucleus</keyword>
<keyword id="KW-1185">Reference proteome</keyword>
<keyword id="KW-0804">Transcription</keyword>
<keyword id="KW-0805">Transcription regulation</keyword>
<protein>
    <recommendedName>
        <fullName>Homeobox-leucine zipper protein HOX21</fullName>
    </recommendedName>
    <alternativeName>
        <fullName>HD-ZIP protein HOX21</fullName>
    </alternativeName>
    <alternativeName>
        <fullName>Homeodomain transcription factor HOX21</fullName>
    </alternativeName>
    <alternativeName>
        <fullName>OsHox21</fullName>
    </alternativeName>
</protein>
<accession>A2XD08</accession>
<accession>A5JPV9</accession>
<dbReference type="EMBL" id="CM000128">
    <property type="protein sequence ID" value="EAY88718.1"/>
    <property type="status" value="ALT_SEQ"/>
    <property type="molecule type" value="Genomic_DNA"/>
</dbReference>
<dbReference type="EMBL" id="EF555544">
    <property type="protein sequence ID" value="ABQ57285.1"/>
    <property type="molecule type" value="mRNA"/>
</dbReference>
<dbReference type="SMR" id="A2XD08"/>
<dbReference type="STRING" id="39946.A2XD08"/>
<dbReference type="EnsemblPlants" id="OsLaMu_03g0005280.01">
    <property type="protein sequence ID" value="OsLaMu_03g0005280.01"/>
    <property type="gene ID" value="OsLaMu_03g0005280"/>
</dbReference>
<dbReference type="EnsemblPlants" id="OsLiXu_03g0005300.01">
    <property type="protein sequence ID" value="OsLiXu_03g0005300.01"/>
    <property type="gene ID" value="OsLiXu_03g0005300"/>
</dbReference>
<dbReference type="EnsemblPlants" id="OsMH63_03G005240_01">
    <property type="protein sequence ID" value="OsMH63_03G005240_01"/>
    <property type="gene ID" value="OsMH63_03G005240"/>
</dbReference>
<dbReference type="EnsemblPlants" id="OsPr106_03g0005320.01">
    <property type="protein sequence ID" value="OsPr106_03g0005320.01"/>
    <property type="gene ID" value="OsPr106_03g0005320"/>
</dbReference>
<dbReference type="EnsemblPlants" id="OsZS97_03G005130_01">
    <property type="protein sequence ID" value="OsZS97_03G005130_01"/>
    <property type="gene ID" value="OsZS97_03G005130"/>
</dbReference>
<dbReference type="Gramene" id="OsLaMu_03g0005280.01">
    <property type="protein sequence ID" value="OsLaMu_03g0005280.01"/>
    <property type="gene ID" value="OsLaMu_03g0005280"/>
</dbReference>
<dbReference type="Gramene" id="OsLiXu_03g0005300.01">
    <property type="protein sequence ID" value="OsLiXu_03g0005300.01"/>
    <property type="gene ID" value="OsLiXu_03g0005300"/>
</dbReference>
<dbReference type="Gramene" id="OsMH63_03G005240_01">
    <property type="protein sequence ID" value="OsMH63_03G005240_01"/>
    <property type="gene ID" value="OsMH63_03G005240"/>
</dbReference>
<dbReference type="Gramene" id="OsPr106_03g0005320.01">
    <property type="protein sequence ID" value="OsPr106_03g0005320.01"/>
    <property type="gene ID" value="OsPr106_03g0005320"/>
</dbReference>
<dbReference type="Gramene" id="OsZS97_03G005130_01">
    <property type="protein sequence ID" value="OsZS97_03G005130_01"/>
    <property type="gene ID" value="OsZS97_03G005130"/>
</dbReference>
<dbReference type="Proteomes" id="UP000007015">
    <property type="component" value="Chromosome 3"/>
</dbReference>
<dbReference type="GO" id="GO:0005634">
    <property type="term" value="C:nucleus"/>
    <property type="evidence" value="ECO:0007669"/>
    <property type="project" value="UniProtKB-SubCell"/>
</dbReference>
<dbReference type="GO" id="GO:0000981">
    <property type="term" value="F:DNA-binding transcription factor activity, RNA polymerase II-specific"/>
    <property type="evidence" value="ECO:0007669"/>
    <property type="project" value="InterPro"/>
</dbReference>
<dbReference type="GO" id="GO:0043565">
    <property type="term" value="F:sequence-specific DNA binding"/>
    <property type="evidence" value="ECO:0007669"/>
    <property type="project" value="InterPro"/>
</dbReference>
<dbReference type="GO" id="GO:0045893">
    <property type="term" value="P:positive regulation of DNA-templated transcription"/>
    <property type="evidence" value="ECO:0007669"/>
    <property type="project" value="TreeGrafter"/>
</dbReference>
<dbReference type="CDD" id="cd00086">
    <property type="entry name" value="homeodomain"/>
    <property type="match status" value="1"/>
</dbReference>
<dbReference type="FunFam" id="1.10.10.60:FF:000200">
    <property type="entry name" value="Homeobox-leucine zipper protein ATHB-13"/>
    <property type="match status" value="1"/>
</dbReference>
<dbReference type="Gene3D" id="1.10.10.60">
    <property type="entry name" value="Homeodomain-like"/>
    <property type="match status" value="1"/>
</dbReference>
<dbReference type="InterPro" id="IPR001356">
    <property type="entry name" value="HD"/>
</dbReference>
<dbReference type="InterPro" id="IPR045224">
    <property type="entry name" value="HDZip_class_I_plant"/>
</dbReference>
<dbReference type="InterPro" id="IPR017970">
    <property type="entry name" value="Homeobox_CS"/>
</dbReference>
<dbReference type="InterPro" id="IPR009057">
    <property type="entry name" value="Homeodomain-like_sf"/>
</dbReference>
<dbReference type="InterPro" id="IPR000047">
    <property type="entry name" value="HTH_motif"/>
</dbReference>
<dbReference type="InterPro" id="IPR003106">
    <property type="entry name" value="Leu_zip_homeo"/>
</dbReference>
<dbReference type="PANTHER" id="PTHR24326">
    <property type="entry name" value="HOMEOBOX-LEUCINE ZIPPER PROTEIN"/>
    <property type="match status" value="1"/>
</dbReference>
<dbReference type="PANTHER" id="PTHR24326:SF176">
    <property type="entry name" value="HOMEOBOX-LEUCINE ZIPPER PROTEIN ATHB-13"/>
    <property type="match status" value="1"/>
</dbReference>
<dbReference type="Pfam" id="PF02183">
    <property type="entry name" value="HALZ"/>
    <property type="match status" value="1"/>
</dbReference>
<dbReference type="Pfam" id="PF00046">
    <property type="entry name" value="Homeodomain"/>
    <property type="match status" value="1"/>
</dbReference>
<dbReference type="PRINTS" id="PR00031">
    <property type="entry name" value="HTHREPRESSR"/>
</dbReference>
<dbReference type="SMART" id="SM00389">
    <property type="entry name" value="HOX"/>
    <property type="match status" value="1"/>
</dbReference>
<dbReference type="SUPFAM" id="SSF46689">
    <property type="entry name" value="Homeodomain-like"/>
    <property type="match status" value="1"/>
</dbReference>
<dbReference type="PROSITE" id="PS00027">
    <property type="entry name" value="HOMEOBOX_1"/>
    <property type="match status" value="1"/>
</dbReference>
<dbReference type="PROSITE" id="PS50071">
    <property type="entry name" value="HOMEOBOX_2"/>
    <property type="match status" value="1"/>
</dbReference>
<name>HOX21_ORYSI</name>
<comment type="function">
    <text evidence="1">Probable transcription factor.</text>
</comment>
<comment type="subcellular location">
    <subcellularLocation>
        <location evidence="5">Nucleus</location>
    </subcellularLocation>
</comment>
<comment type="tissue specificity">
    <text evidence="4">Expressed in seedlings, roots, stems, leaf blades and panicles.</text>
</comment>
<comment type="similarity">
    <text evidence="5">Belongs to the HD-ZIP homeobox family. Class I subfamily.</text>
</comment>
<comment type="sequence caution" evidence="5">
    <conflict type="erroneous gene model prediction">
        <sequence resource="EMBL-CDS" id="EAY88718"/>
    </conflict>
</comment>
<feature type="chain" id="PRO_0000331714" description="Homeobox-leucine zipper protein HOX21">
    <location>
        <begin position="1"/>
        <end position="360"/>
    </location>
</feature>
<feature type="DNA-binding region" description="Homeobox" evidence="2">
    <location>
        <begin position="121"/>
        <end position="180"/>
    </location>
</feature>
<feature type="region of interest" description="Disordered" evidence="3">
    <location>
        <begin position="25"/>
        <end position="75"/>
    </location>
</feature>
<feature type="region of interest" description="Disordered" evidence="3">
    <location>
        <begin position="88"/>
        <end position="126"/>
    </location>
</feature>
<feature type="region of interest" description="Leucine-zipper">
    <location>
        <begin position="179"/>
        <end position="223"/>
    </location>
</feature>
<feature type="region of interest" description="Disordered" evidence="3">
    <location>
        <begin position="233"/>
        <end position="278"/>
    </location>
</feature>
<feature type="region of interest" description="Disordered" evidence="3">
    <location>
        <begin position="299"/>
        <end position="328"/>
    </location>
</feature>
<feature type="compositionally biased region" description="Basic residues" evidence="3">
    <location>
        <begin position="36"/>
        <end position="55"/>
    </location>
</feature>
<feature type="compositionally biased region" description="Pro residues" evidence="3">
    <location>
        <begin position="56"/>
        <end position="68"/>
    </location>
</feature>
<feature type="compositionally biased region" description="Gly residues" evidence="3">
    <location>
        <begin position="97"/>
        <end position="109"/>
    </location>
</feature>
<feature type="compositionally biased region" description="Polar residues" evidence="3">
    <location>
        <begin position="234"/>
        <end position="246"/>
    </location>
</feature>
<proteinExistence type="evidence at transcript level"/>
<sequence>MASNGMASSPSSFFPPNFLLHMAQQQAAPPHDPQEHHHHHHHGHHHEQQQHHHHLGPPPPPPPHPHNPFLPSSAQCPSLQEFRGMAPMLGKRPMSYGDGGGGGDEVNGGGEDELSDDGSQAGEKKRRLNVEQVRTLEKNFELGNKLEPERKMQLARALGLQPRQVAIWFQNRRARWKTKQLEKDYDALKRQLDAVKAENDALLNHNKKLQAEIVALKGREAASELINLNKETEASCSNRSENSSEINLDISRTPPPDAAALDAAPTAHHHHHGGGGGGGGGGGMIPFYTSIARPASGGGVDIDQLLHSSSGGAGGPKMEHHGGGGNVQAASVDTASFGNLLCGVDEPPPFWPWPDHQHFH</sequence>
<organism>
    <name type="scientific">Oryza sativa subsp. indica</name>
    <name type="common">Rice</name>
    <dbReference type="NCBI Taxonomy" id="39946"/>
    <lineage>
        <taxon>Eukaryota</taxon>
        <taxon>Viridiplantae</taxon>
        <taxon>Streptophyta</taxon>
        <taxon>Embryophyta</taxon>
        <taxon>Tracheophyta</taxon>
        <taxon>Spermatophyta</taxon>
        <taxon>Magnoliopsida</taxon>
        <taxon>Liliopsida</taxon>
        <taxon>Poales</taxon>
        <taxon>Poaceae</taxon>
        <taxon>BOP clade</taxon>
        <taxon>Oryzoideae</taxon>
        <taxon>Oryzeae</taxon>
        <taxon>Oryzinae</taxon>
        <taxon>Oryza</taxon>
        <taxon>Oryza sativa</taxon>
    </lineage>
</organism>
<evidence type="ECO:0000250" key="1"/>
<evidence type="ECO:0000255" key="2">
    <source>
        <dbReference type="PROSITE-ProRule" id="PRU00108"/>
    </source>
</evidence>
<evidence type="ECO:0000256" key="3">
    <source>
        <dbReference type="SAM" id="MobiDB-lite"/>
    </source>
</evidence>
<evidence type="ECO:0000269" key="4">
    <source>
    </source>
</evidence>
<evidence type="ECO:0000305" key="5"/>